<name>ATP23_KLULA</name>
<comment type="function">
    <text evidence="1">Has a dual role in the assembly of mitochondrial ATPase. Acts as a protease that removes N-terminal residues of mitochondrial ATPase CF(0) subunit 6 at the intermembrane space side. Also involved in the correct assembly of the membrane-embedded ATPase CF(0) particle, probably mediating association of subunit 6 with the subunit 9 ring (By similarity).</text>
</comment>
<comment type="subcellular location">
    <subcellularLocation>
        <location>Mitochondrion inner membrane</location>
        <topology>Peripheral membrane protein</topology>
        <orientation>Intermembrane side</orientation>
    </subcellularLocation>
    <text evidence="1">Associates loosely with the inner membrane.</text>
</comment>
<comment type="similarity">
    <text evidence="4">Belongs to the peptidase M76 family.</text>
</comment>
<keyword id="KW-0378">Hydrolase</keyword>
<keyword id="KW-0472">Membrane</keyword>
<keyword id="KW-0479">Metal-binding</keyword>
<keyword id="KW-0482">Metalloprotease</keyword>
<keyword id="KW-0496">Mitochondrion</keyword>
<keyword id="KW-0999">Mitochondrion inner membrane</keyword>
<keyword id="KW-0645">Protease</keyword>
<keyword id="KW-1185">Reference proteome</keyword>
<gene>
    <name type="primary">ATP23</name>
    <name type="ordered locus">KLLA0C09130g</name>
</gene>
<evidence type="ECO:0000250" key="1"/>
<evidence type="ECO:0000255" key="2">
    <source>
        <dbReference type="PROSITE-ProRule" id="PRU10095"/>
    </source>
</evidence>
<evidence type="ECO:0000256" key="3">
    <source>
        <dbReference type="SAM" id="MobiDB-lite"/>
    </source>
</evidence>
<evidence type="ECO:0000305" key="4"/>
<accession>Q6CTY3</accession>
<feature type="chain" id="PRO_0000330064" description="Mitochondrial inner membrane protease ATP23">
    <location>
        <begin position="1"/>
        <end position="247"/>
    </location>
</feature>
<feature type="region of interest" description="Disordered" evidence="3">
    <location>
        <begin position="1"/>
        <end position="21"/>
    </location>
</feature>
<feature type="active site" evidence="2">
    <location>
        <position position="145"/>
    </location>
</feature>
<feature type="binding site" evidence="1">
    <location>
        <position position="144"/>
    </location>
    <ligand>
        <name>a divalent metal cation</name>
        <dbReference type="ChEBI" id="CHEBI:60240"/>
        <note>catalytic</note>
    </ligand>
</feature>
<feature type="binding site" evidence="1">
    <location>
        <position position="148"/>
    </location>
    <ligand>
        <name>a divalent metal cation</name>
        <dbReference type="ChEBI" id="CHEBI:60240"/>
        <note>catalytic</note>
    </ligand>
</feature>
<proteinExistence type="inferred from homology"/>
<organism>
    <name type="scientific">Kluyveromyces lactis (strain ATCC 8585 / CBS 2359 / DSM 70799 / NBRC 1267 / NRRL Y-1140 / WM37)</name>
    <name type="common">Yeast</name>
    <name type="synonym">Candida sphaerica</name>
    <dbReference type="NCBI Taxonomy" id="284590"/>
    <lineage>
        <taxon>Eukaryota</taxon>
        <taxon>Fungi</taxon>
        <taxon>Dikarya</taxon>
        <taxon>Ascomycota</taxon>
        <taxon>Saccharomycotina</taxon>
        <taxon>Saccharomycetes</taxon>
        <taxon>Saccharomycetales</taxon>
        <taxon>Saccharomycetaceae</taxon>
        <taxon>Kluyveromyces</taxon>
    </lineage>
</organism>
<protein>
    <recommendedName>
        <fullName>Mitochondrial inner membrane protease ATP23</fullName>
        <ecNumber>3.4.24.-</ecNumber>
    </recommendedName>
</protein>
<reference key="1">
    <citation type="journal article" date="2004" name="Nature">
        <title>Genome evolution in yeasts.</title>
        <authorList>
            <person name="Dujon B."/>
            <person name="Sherman D."/>
            <person name="Fischer G."/>
            <person name="Durrens P."/>
            <person name="Casaregola S."/>
            <person name="Lafontaine I."/>
            <person name="de Montigny J."/>
            <person name="Marck C."/>
            <person name="Neuveglise C."/>
            <person name="Talla E."/>
            <person name="Goffard N."/>
            <person name="Frangeul L."/>
            <person name="Aigle M."/>
            <person name="Anthouard V."/>
            <person name="Babour A."/>
            <person name="Barbe V."/>
            <person name="Barnay S."/>
            <person name="Blanchin S."/>
            <person name="Beckerich J.-M."/>
            <person name="Beyne E."/>
            <person name="Bleykasten C."/>
            <person name="Boisrame A."/>
            <person name="Boyer J."/>
            <person name="Cattolico L."/>
            <person name="Confanioleri F."/>
            <person name="de Daruvar A."/>
            <person name="Despons L."/>
            <person name="Fabre E."/>
            <person name="Fairhead C."/>
            <person name="Ferry-Dumazet H."/>
            <person name="Groppi A."/>
            <person name="Hantraye F."/>
            <person name="Hennequin C."/>
            <person name="Jauniaux N."/>
            <person name="Joyet P."/>
            <person name="Kachouri R."/>
            <person name="Kerrest A."/>
            <person name="Koszul R."/>
            <person name="Lemaire M."/>
            <person name="Lesur I."/>
            <person name="Ma L."/>
            <person name="Muller H."/>
            <person name="Nicaud J.-M."/>
            <person name="Nikolski M."/>
            <person name="Oztas S."/>
            <person name="Ozier-Kalogeropoulos O."/>
            <person name="Pellenz S."/>
            <person name="Potier S."/>
            <person name="Richard G.-F."/>
            <person name="Straub M.-L."/>
            <person name="Suleau A."/>
            <person name="Swennen D."/>
            <person name="Tekaia F."/>
            <person name="Wesolowski-Louvel M."/>
            <person name="Westhof E."/>
            <person name="Wirth B."/>
            <person name="Zeniou-Meyer M."/>
            <person name="Zivanovic Y."/>
            <person name="Bolotin-Fukuhara M."/>
            <person name="Thierry A."/>
            <person name="Bouchier C."/>
            <person name="Caudron B."/>
            <person name="Scarpelli C."/>
            <person name="Gaillardin C."/>
            <person name="Weissenbach J."/>
            <person name="Wincker P."/>
            <person name="Souciet J.-L."/>
        </authorList>
    </citation>
    <scope>NUCLEOTIDE SEQUENCE [LARGE SCALE GENOMIC DNA]</scope>
    <source>
        <strain>ATCC 8585 / CBS 2359 / DSM 70799 / NBRC 1267 / NRRL Y-1140 / WM37</strain>
    </source>
</reference>
<sequence>MSVPPPPKEDLIKPNPPKSESAVSGFNWWRRTFQYKTGLGLTPEEETQYENDYKFVLQRKQCSKCYEYRDWLLNYSPTVIFMTQQIAKLNNKNTNADVFKFDESKIICDVCPDWKSGGFHPDLGILICQNRIKDKWHLEDTLAHELVHYFDNLKWEVDWLNLRHHACSEIRASSLSGECRFFQEFARRGFNTGFKVDRGHQACVKRRAAISVSGNPNCRDKEHAERVVDEVWDSCFNDTRPFDEIYR</sequence>
<dbReference type="EC" id="3.4.24.-"/>
<dbReference type="EMBL" id="CR382123">
    <property type="protein sequence ID" value="CAH01457.1"/>
    <property type="molecule type" value="Genomic_DNA"/>
</dbReference>
<dbReference type="RefSeq" id="XP_452606.1">
    <property type="nucleotide sequence ID" value="XM_452606.1"/>
</dbReference>
<dbReference type="FunCoup" id="Q6CTY3">
    <property type="interactions" value="502"/>
</dbReference>
<dbReference type="STRING" id="284590.Q6CTY3"/>
<dbReference type="MEROPS" id="M76.002"/>
<dbReference type="PaxDb" id="284590-Q6CTY3"/>
<dbReference type="KEGG" id="kla:KLLA0_C09130g"/>
<dbReference type="eggNOG" id="KOG3314">
    <property type="taxonomic scope" value="Eukaryota"/>
</dbReference>
<dbReference type="HOGENOM" id="CLU_079125_0_0_1"/>
<dbReference type="InParanoid" id="Q6CTY3"/>
<dbReference type="OMA" id="EAHQNCV"/>
<dbReference type="Proteomes" id="UP000000598">
    <property type="component" value="Chromosome C"/>
</dbReference>
<dbReference type="GO" id="GO:0005743">
    <property type="term" value="C:mitochondrial inner membrane"/>
    <property type="evidence" value="ECO:0007669"/>
    <property type="project" value="UniProtKB-SubCell"/>
</dbReference>
<dbReference type="GO" id="GO:0046872">
    <property type="term" value="F:metal ion binding"/>
    <property type="evidence" value="ECO:0007669"/>
    <property type="project" value="UniProtKB-KW"/>
</dbReference>
<dbReference type="GO" id="GO:0004222">
    <property type="term" value="F:metalloendopeptidase activity"/>
    <property type="evidence" value="ECO:0007669"/>
    <property type="project" value="InterPro"/>
</dbReference>
<dbReference type="GO" id="GO:0034982">
    <property type="term" value="P:mitochondrial protein processing"/>
    <property type="evidence" value="ECO:0007669"/>
    <property type="project" value="TreeGrafter"/>
</dbReference>
<dbReference type="GO" id="GO:0033615">
    <property type="term" value="P:mitochondrial proton-transporting ATP synthase complex assembly"/>
    <property type="evidence" value="ECO:0007669"/>
    <property type="project" value="TreeGrafter"/>
</dbReference>
<dbReference type="InterPro" id="IPR019165">
    <property type="entry name" value="Peptidase_M76_ATP23"/>
</dbReference>
<dbReference type="PANTHER" id="PTHR21711">
    <property type="entry name" value="MITOCHONDRIAL INNER MEMBRANE PROTEASE"/>
    <property type="match status" value="1"/>
</dbReference>
<dbReference type="PANTHER" id="PTHR21711:SF0">
    <property type="entry name" value="MITOCHONDRIAL INNER MEMBRANE PROTEASE ATP23 HOMOLOG"/>
    <property type="match status" value="1"/>
</dbReference>
<dbReference type="Pfam" id="PF09768">
    <property type="entry name" value="Peptidase_M76"/>
    <property type="match status" value="1"/>
</dbReference>
<dbReference type="PROSITE" id="PS00142">
    <property type="entry name" value="ZINC_PROTEASE"/>
    <property type="match status" value="1"/>
</dbReference>